<reference key="1">
    <citation type="journal article" date="2004" name="Mol. Plant Microbe Interact.">
        <title>The genome sequence of the Gram-positive sugarcane pathogen Leifsonia xyli subsp. xyli.</title>
        <authorList>
            <person name="Monteiro-Vitorello C.B."/>
            <person name="Camargo L.E.A."/>
            <person name="Van Sluys M.A."/>
            <person name="Kitajima J.P."/>
            <person name="Truffi D."/>
            <person name="do Amaral A.M."/>
            <person name="Harakava R."/>
            <person name="de Oliveira J.C.F."/>
            <person name="Wood D."/>
            <person name="de Oliveira M.C."/>
            <person name="Miyaki C.Y."/>
            <person name="Takita M.A."/>
            <person name="da Silva A.C.R."/>
            <person name="Furlan L.R."/>
            <person name="Carraro D.M."/>
            <person name="Camarotte G."/>
            <person name="Almeida N.F. Jr."/>
            <person name="Carrer H."/>
            <person name="Coutinho L.L."/>
            <person name="El-Dorry H.A."/>
            <person name="Ferro M.I.T."/>
            <person name="Gagliardi P.R."/>
            <person name="Giglioti E."/>
            <person name="Goldman M.H.S."/>
            <person name="Goldman G.H."/>
            <person name="Kimura E.T."/>
            <person name="Ferro E.S."/>
            <person name="Kuramae E.E."/>
            <person name="Lemos E.G.M."/>
            <person name="Lemos M.V.F."/>
            <person name="Mauro S.M.Z."/>
            <person name="Machado M.A."/>
            <person name="Marino C.L."/>
            <person name="Menck C.F."/>
            <person name="Nunes L.R."/>
            <person name="Oliveira R.C."/>
            <person name="Pereira G.G."/>
            <person name="Siqueira W."/>
            <person name="de Souza A.A."/>
            <person name="Tsai S.M."/>
            <person name="Zanca A.S."/>
            <person name="Simpson A.J.G."/>
            <person name="Brumbley S.M."/>
            <person name="Setubal J.C."/>
        </authorList>
    </citation>
    <scope>NUCLEOTIDE SEQUENCE [LARGE SCALE GENOMIC DNA]</scope>
    <source>
        <strain>CTCB07</strain>
    </source>
</reference>
<comment type="function">
    <text evidence="1">An essential GTPase that binds both GDP and GTP, with rapid nucleotide exchange. Plays a role in 16S rRNA processing and 30S ribosomal subunit biogenesis and possibly also in cell cycle regulation and energy metabolism.</text>
</comment>
<comment type="subunit">
    <text evidence="1">Monomer.</text>
</comment>
<comment type="subcellular location">
    <subcellularLocation>
        <location>Cytoplasm</location>
    </subcellularLocation>
    <subcellularLocation>
        <location evidence="1">Cell membrane</location>
        <topology evidence="1">Peripheral membrane protein</topology>
    </subcellularLocation>
</comment>
<comment type="similarity">
    <text evidence="1 2">Belongs to the TRAFAC class TrmE-Era-EngA-EngB-Septin-like GTPase superfamily. Era GTPase family.</text>
</comment>
<sequence length="297" mass="32908">MTDYRAGFVSFVGRPNVGKSTLTNALVGEKIAITSSKPQTTRRAIRGIMHRREGQLILVDTPGVHRPRTLLGERLNTLVESTLGDVDVIGFCVPADERIGPGDRFINERLDDYPRAKKVAIVTKIDSARKTQVAEQLLAVSALREWEAIVPVSAVNSIQLDTLTTELMRLLPVSPGPLYPDESVTDEGVEDRIAEYIREAVLDGVEDELPHSLAVTIDDLVERDDKDLLEIYANLFVERDSQKAIVIGKGGSRIREVGATAREPIEALLGRHVFLSIRVKVAKDWQRDPKQLGRLGF</sequence>
<evidence type="ECO:0000255" key="1">
    <source>
        <dbReference type="HAMAP-Rule" id="MF_00367"/>
    </source>
</evidence>
<evidence type="ECO:0000255" key="2">
    <source>
        <dbReference type="PROSITE-ProRule" id="PRU01050"/>
    </source>
</evidence>
<feature type="chain" id="PRO_0000180023" description="GTPase Era">
    <location>
        <begin position="1"/>
        <end position="297"/>
    </location>
</feature>
<feature type="domain" description="Era-type G" evidence="2">
    <location>
        <begin position="5"/>
        <end position="173"/>
    </location>
</feature>
<feature type="domain" description="KH type-2" evidence="1">
    <location>
        <begin position="205"/>
        <end position="283"/>
    </location>
</feature>
<feature type="region of interest" description="G1" evidence="2">
    <location>
        <begin position="13"/>
        <end position="20"/>
    </location>
</feature>
<feature type="region of interest" description="G2" evidence="2">
    <location>
        <begin position="39"/>
        <end position="43"/>
    </location>
</feature>
<feature type="region of interest" description="G3" evidence="2">
    <location>
        <begin position="60"/>
        <end position="63"/>
    </location>
</feature>
<feature type="region of interest" description="G4" evidence="2">
    <location>
        <begin position="123"/>
        <end position="126"/>
    </location>
</feature>
<feature type="region of interest" description="G5" evidence="2">
    <location>
        <begin position="152"/>
        <end position="154"/>
    </location>
</feature>
<feature type="binding site" evidence="1">
    <location>
        <begin position="13"/>
        <end position="20"/>
    </location>
    <ligand>
        <name>GTP</name>
        <dbReference type="ChEBI" id="CHEBI:37565"/>
    </ligand>
</feature>
<feature type="binding site" evidence="1">
    <location>
        <begin position="60"/>
        <end position="64"/>
    </location>
    <ligand>
        <name>GTP</name>
        <dbReference type="ChEBI" id="CHEBI:37565"/>
    </ligand>
</feature>
<feature type="binding site" evidence="1">
    <location>
        <begin position="123"/>
        <end position="126"/>
    </location>
    <ligand>
        <name>GTP</name>
        <dbReference type="ChEBI" id="CHEBI:37565"/>
    </ligand>
</feature>
<keyword id="KW-1003">Cell membrane</keyword>
<keyword id="KW-0963">Cytoplasm</keyword>
<keyword id="KW-0342">GTP-binding</keyword>
<keyword id="KW-0472">Membrane</keyword>
<keyword id="KW-0547">Nucleotide-binding</keyword>
<keyword id="KW-1185">Reference proteome</keyword>
<keyword id="KW-0690">Ribosome biogenesis</keyword>
<keyword id="KW-0694">RNA-binding</keyword>
<keyword id="KW-0699">rRNA-binding</keyword>
<name>ERA_LEIXX</name>
<protein>
    <recommendedName>
        <fullName evidence="1">GTPase Era</fullName>
    </recommendedName>
</protein>
<organism>
    <name type="scientific">Leifsonia xyli subsp. xyli (strain CTCB07)</name>
    <dbReference type="NCBI Taxonomy" id="281090"/>
    <lineage>
        <taxon>Bacteria</taxon>
        <taxon>Bacillati</taxon>
        <taxon>Actinomycetota</taxon>
        <taxon>Actinomycetes</taxon>
        <taxon>Micrococcales</taxon>
        <taxon>Microbacteriaceae</taxon>
        <taxon>Leifsonia</taxon>
    </lineage>
</organism>
<dbReference type="EMBL" id="AE016822">
    <property type="protein sequence ID" value="AAT89270.1"/>
    <property type="molecule type" value="Genomic_DNA"/>
</dbReference>
<dbReference type="RefSeq" id="WP_011186261.1">
    <property type="nucleotide sequence ID" value="NC_006087.1"/>
</dbReference>
<dbReference type="SMR" id="Q6AEC6"/>
<dbReference type="STRING" id="281090.Lxx14580"/>
<dbReference type="KEGG" id="lxx:Lxx14580"/>
<dbReference type="eggNOG" id="COG1159">
    <property type="taxonomic scope" value="Bacteria"/>
</dbReference>
<dbReference type="HOGENOM" id="CLU_038009_0_2_11"/>
<dbReference type="Proteomes" id="UP000001306">
    <property type="component" value="Chromosome"/>
</dbReference>
<dbReference type="GO" id="GO:0005829">
    <property type="term" value="C:cytosol"/>
    <property type="evidence" value="ECO:0007669"/>
    <property type="project" value="TreeGrafter"/>
</dbReference>
<dbReference type="GO" id="GO:0005886">
    <property type="term" value="C:plasma membrane"/>
    <property type="evidence" value="ECO:0007669"/>
    <property type="project" value="UniProtKB-SubCell"/>
</dbReference>
<dbReference type="GO" id="GO:0005525">
    <property type="term" value="F:GTP binding"/>
    <property type="evidence" value="ECO:0007669"/>
    <property type="project" value="UniProtKB-UniRule"/>
</dbReference>
<dbReference type="GO" id="GO:0003924">
    <property type="term" value="F:GTPase activity"/>
    <property type="evidence" value="ECO:0007669"/>
    <property type="project" value="UniProtKB-UniRule"/>
</dbReference>
<dbReference type="GO" id="GO:0043024">
    <property type="term" value="F:ribosomal small subunit binding"/>
    <property type="evidence" value="ECO:0007669"/>
    <property type="project" value="TreeGrafter"/>
</dbReference>
<dbReference type="GO" id="GO:0070181">
    <property type="term" value="F:small ribosomal subunit rRNA binding"/>
    <property type="evidence" value="ECO:0007669"/>
    <property type="project" value="UniProtKB-UniRule"/>
</dbReference>
<dbReference type="GO" id="GO:0000028">
    <property type="term" value="P:ribosomal small subunit assembly"/>
    <property type="evidence" value="ECO:0007669"/>
    <property type="project" value="TreeGrafter"/>
</dbReference>
<dbReference type="CDD" id="cd04163">
    <property type="entry name" value="Era"/>
    <property type="match status" value="1"/>
</dbReference>
<dbReference type="CDD" id="cd22534">
    <property type="entry name" value="KH-II_Era"/>
    <property type="match status" value="1"/>
</dbReference>
<dbReference type="Gene3D" id="3.30.300.20">
    <property type="match status" value="1"/>
</dbReference>
<dbReference type="Gene3D" id="3.40.50.300">
    <property type="entry name" value="P-loop containing nucleotide triphosphate hydrolases"/>
    <property type="match status" value="1"/>
</dbReference>
<dbReference type="HAMAP" id="MF_00367">
    <property type="entry name" value="GTPase_Era"/>
    <property type="match status" value="1"/>
</dbReference>
<dbReference type="InterPro" id="IPR030388">
    <property type="entry name" value="G_ERA_dom"/>
</dbReference>
<dbReference type="InterPro" id="IPR006073">
    <property type="entry name" value="GTP-bd"/>
</dbReference>
<dbReference type="InterPro" id="IPR005662">
    <property type="entry name" value="GTPase_Era-like"/>
</dbReference>
<dbReference type="InterPro" id="IPR015946">
    <property type="entry name" value="KH_dom-like_a/b"/>
</dbReference>
<dbReference type="InterPro" id="IPR004044">
    <property type="entry name" value="KH_dom_type_2"/>
</dbReference>
<dbReference type="InterPro" id="IPR009019">
    <property type="entry name" value="KH_sf_prok-type"/>
</dbReference>
<dbReference type="InterPro" id="IPR027417">
    <property type="entry name" value="P-loop_NTPase"/>
</dbReference>
<dbReference type="InterPro" id="IPR005225">
    <property type="entry name" value="Small_GTP-bd"/>
</dbReference>
<dbReference type="NCBIfam" id="TIGR00436">
    <property type="entry name" value="era"/>
    <property type="match status" value="1"/>
</dbReference>
<dbReference type="NCBIfam" id="NF000908">
    <property type="entry name" value="PRK00089.1"/>
    <property type="match status" value="1"/>
</dbReference>
<dbReference type="NCBIfam" id="TIGR00231">
    <property type="entry name" value="small_GTP"/>
    <property type="match status" value="1"/>
</dbReference>
<dbReference type="PANTHER" id="PTHR42698">
    <property type="entry name" value="GTPASE ERA"/>
    <property type="match status" value="1"/>
</dbReference>
<dbReference type="PANTHER" id="PTHR42698:SF1">
    <property type="entry name" value="GTPASE ERA, MITOCHONDRIAL"/>
    <property type="match status" value="1"/>
</dbReference>
<dbReference type="Pfam" id="PF07650">
    <property type="entry name" value="KH_2"/>
    <property type="match status" value="1"/>
</dbReference>
<dbReference type="Pfam" id="PF01926">
    <property type="entry name" value="MMR_HSR1"/>
    <property type="match status" value="1"/>
</dbReference>
<dbReference type="SUPFAM" id="SSF52540">
    <property type="entry name" value="P-loop containing nucleoside triphosphate hydrolases"/>
    <property type="match status" value="1"/>
</dbReference>
<dbReference type="SUPFAM" id="SSF54814">
    <property type="entry name" value="Prokaryotic type KH domain (KH-domain type II)"/>
    <property type="match status" value="1"/>
</dbReference>
<dbReference type="PROSITE" id="PS51713">
    <property type="entry name" value="G_ERA"/>
    <property type="match status" value="1"/>
</dbReference>
<dbReference type="PROSITE" id="PS50823">
    <property type="entry name" value="KH_TYPE_2"/>
    <property type="match status" value="1"/>
</dbReference>
<proteinExistence type="inferred from homology"/>
<accession>Q6AEC6</accession>
<gene>
    <name evidence="1" type="primary">era</name>
    <name type="ordered locus">Lxx14580</name>
</gene>